<keyword id="KW-0002">3D-structure</keyword>
<keyword id="KW-0067">ATP-binding</keyword>
<keyword id="KW-0963">Cytoplasm</keyword>
<keyword id="KW-0237">DNA synthesis</keyword>
<keyword id="KW-0418">Kinase</keyword>
<keyword id="KW-0479">Metal-binding</keyword>
<keyword id="KW-0547">Nucleotide-binding</keyword>
<keyword id="KW-1185">Reference proteome</keyword>
<keyword id="KW-0808">Transferase</keyword>
<keyword id="KW-0862">Zinc</keyword>
<reference key="1">
    <citation type="journal article" date="1999" name="Nature">
        <title>Evidence for lateral gene transfer between Archaea and Bacteria from genome sequence of Thermotoga maritima.</title>
        <authorList>
            <person name="Nelson K.E."/>
            <person name="Clayton R.A."/>
            <person name="Gill S.R."/>
            <person name="Gwinn M.L."/>
            <person name="Dodson R.J."/>
            <person name="Haft D.H."/>
            <person name="Hickey E.K."/>
            <person name="Peterson J.D."/>
            <person name="Nelson W.C."/>
            <person name="Ketchum K.A."/>
            <person name="McDonald L.A."/>
            <person name="Utterback T.R."/>
            <person name="Malek J.A."/>
            <person name="Linher K.D."/>
            <person name="Garrett M.M."/>
            <person name="Stewart A.M."/>
            <person name="Cotton M.D."/>
            <person name="Pratt M.S."/>
            <person name="Phillips C.A."/>
            <person name="Richardson D.L."/>
            <person name="Heidelberg J.F."/>
            <person name="Sutton G.G."/>
            <person name="Fleischmann R.D."/>
            <person name="Eisen J.A."/>
            <person name="White O."/>
            <person name="Salzberg S.L."/>
            <person name="Smith H.O."/>
            <person name="Venter J.C."/>
            <person name="Fraser C.M."/>
        </authorList>
    </citation>
    <scope>NUCLEOTIDE SEQUENCE [LARGE SCALE GENOMIC DNA]</scope>
    <source>
        <strain>ATCC 43589 / DSM 3109 / JCM 10099 / NBRC 100826 / MSB8</strain>
    </source>
</reference>
<reference key="2">
    <citation type="journal article" date="2007" name="J. Mol. Biol.">
        <title>Binding of ATP to TK1-like enzymes is associated with a conformational change in the quaternary structure.</title>
        <authorList>
            <person name="Segura-Pena D."/>
            <person name="Lutz S."/>
            <person name="Monnerjahn C."/>
            <person name="Konrad M."/>
            <person name="Lavie A."/>
        </authorList>
    </citation>
    <scope>X-RAY CRYSTALLOGRAPHY (1.50 ANGSTROMS) IN COMPLEX WITH ZINC IONS; THYMIDINE AND ATP ANALOGS</scope>
    <scope>SUBUNIT</scope>
</reference>
<reference key="3">
    <citation type="journal article" date="2007" name="Structure">
        <title>Quaternary structure change as a mechanism for the regulation of thymidine kinase 1-like enzymes.</title>
        <authorList>
            <person name="Segura-Pena D."/>
            <person name="Lichter J."/>
            <person name="Trani M."/>
            <person name="Konrad M."/>
            <person name="Lavie A."/>
            <person name="Lutz S."/>
        </authorList>
    </citation>
    <scope>X-RAY CRYSTALLOGRAPHY (1.50 ANGSTROMS) IN COMPLEX WITH ZINC IONS AND THYMIDINE</scope>
    <scope>SUBUNIT</scope>
    <scope>BIOPHYSICOCHEMICAL PROPERTIES</scope>
    <scope>MUTAGENESIS OF HIS-53; GLY-55 AND LEU-129</scope>
</reference>
<protein>
    <recommendedName>
        <fullName>Thymidine kinase</fullName>
        <ecNumber>2.7.1.21</ecNumber>
    </recommendedName>
</protein>
<comment type="catalytic activity">
    <reaction>
        <text>thymidine + ATP = dTMP + ADP + H(+)</text>
        <dbReference type="Rhea" id="RHEA:19129"/>
        <dbReference type="ChEBI" id="CHEBI:15378"/>
        <dbReference type="ChEBI" id="CHEBI:17748"/>
        <dbReference type="ChEBI" id="CHEBI:30616"/>
        <dbReference type="ChEBI" id="CHEBI:63528"/>
        <dbReference type="ChEBI" id="CHEBI:456216"/>
        <dbReference type="EC" id="2.7.1.21"/>
    </reaction>
</comment>
<comment type="biophysicochemical properties">
    <kinetics>
        <KM evidence="4">40 uM for ATP</KM>
        <KM evidence="4">0.5 uM for thymidine</KM>
    </kinetics>
</comment>
<comment type="subunit">
    <text evidence="3 4">Homotetramer.</text>
</comment>
<comment type="interaction">
    <interactant intactId="EBI-15674853">
        <id>Q9WYN2</id>
    </interactant>
    <interactant intactId="EBI-15674853">
        <id>Q9WYN2</id>
        <label>tdk</label>
    </interactant>
    <organismsDiffer>false</organismsDiffer>
    <experiments>2</experiments>
</comment>
<comment type="subcellular location">
    <subcellularLocation>
        <location evidence="5">Cytoplasm</location>
    </subcellularLocation>
</comment>
<comment type="similarity">
    <text evidence="5">Belongs to the thymidine kinase family.</text>
</comment>
<gene>
    <name type="primary">tdk</name>
    <name type="ordered locus">TM_0401</name>
</gene>
<dbReference type="EC" id="2.7.1.21"/>
<dbReference type="EMBL" id="AE000512">
    <property type="protein sequence ID" value="AAD35486.1"/>
    <property type="molecule type" value="Genomic_DNA"/>
</dbReference>
<dbReference type="PIR" id="B72383">
    <property type="entry name" value="B72383"/>
</dbReference>
<dbReference type="RefSeq" id="NP_228211.1">
    <property type="nucleotide sequence ID" value="NC_000853.1"/>
</dbReference>
<dbReference type="RefSeq" id="WP_004083238.1">
    <property type="nucleotide sequence ID" value="NC_000853.1"/>
</dbReference>
<dbReference type="PDB" id="2ORW">
    <property type="method" value="X-ray"/>
    <property type="resolution" value="1.50 A"/>
    <property type="chains" value="A/B=1-184"/>
</dbReference>
<dbReference type="PDB" id="2QPO">
    <property type="method" value="X-ray"/>
    <property type="resolution" value="1.95 A"/>
    <property type="chains" value="A/B/C/D=1-184"/>
</dbReference>
<dbReference type="PDB" id="2QQ0">
    <property type="method" value="X-ray"/>
    <property type="resolution" value="1.50 A"/>
    <property type="chains" value="A/B=1-184"/>
</dbReference>
<dbReference type="PDB" id="2QQE">
    <property type="method" value="X-ray"/>
    <property type="resolution" value="1.90 A"/>
    <property type="chains" value="A/B=1-184"/>
</dbReference>
<dbReference type="PDBsum" id="2ORW"/>
<dbReference type="PDBsum" id="2QPO"/>
<dbReference type="PDBsum" id="2QQ0"/>
<dbReference type="PDBsum" id="2QQE"/>
<dbReference type="SMR" id="Q9WYN2"/>
<dbReference type="DIP" id="DIP-29527N"/>
<dbReference type="FunCoup" id="Q9WYN2">
    <property type="interactions" value="196"/>
</dbReference>
<dbReference type="STRING" id="243274.TM_0401"/>
<dbReference type="PaxDb" id="243274-THEMA_02720"/>
<dbReference type="EnsemblBacteria" id="AAD35486">
    <property type="protein sequence ID" value="AAD35486"/>
    <property type="gene ID" value="TM_0401"/>
</dbReference>
<dbReference type="KEGG" id="tma:TM0401"/>
<dbReference type="KEGG" id="tmi:THEMA_02720"/>
<dbReference type="KEGG" id="tmm:Tmari_0398"/>
<dbReference type="KEGG" id="tmw:THMA_0407"/>
<dbReference type="eggNOG" id="COG1435">
    <property type="taxonomic scope" value="Bacteria"/>
</dbReference>
<dbReference type="InParanoid" id="Q9WYN2"/>
<dbReference type="OrthoDB" id="9781579at2"/>
<dbReference type="BRENDA" id="2.7.1.21">
    <property type="organism ID" value="6331"/>
</dbReference>
<dbReference type="SABIO-RK" id="Q9WYN2"/>
<dbReference type="EvolutionaryTrace" id="Q9WYN2"/>
<dbReference type="Proteomes" id="UP000008183">
    <property type="component" value="Chromosome"/>
</dbReference>
<dbReference type="GO" id="GO:0005829">
    <property type="term" value="C:cytosol"/>
    <property type="evidence" value="ECO:0000318"/>
    <property type="project" value="GO_Central"/>
</dbReference>
<dbReference type="GO" id="GO:0005524">
    <property type="term" value="F:ATP binding"/>
    <property type="evidence" value="ECO:0007669"/>
    <property type="project" value="UniProtKB-UniRule"/>
</dbReference>
<dbReference type="GO" id="GO:0042802">
    <property type="term" value="F:identical protein binding"/>
    <property type="evidence" value="ECO:0000353"/>
    <property type="project" value="IntAct"/>
</dbReference>
<dbReference type="GO" id="GO:0004797">
    <property type="term" value="F:thymidine kinase activity"/>
    <property type="evidence" value="ECO:0000318"/>
    <property type="project" value="GO_Central"/>
</dbReference>
<dbReference type="GO" id="GO:0008270">
    <property type="term" value="F:zinc ion binding"/>
    <property type="evidence" value="ECO:0007669"/>
    <property type="project" value="UniProtKB-UniRule"/>
</dbReference>
<dbReference type="GO" id="GO:0071897">
    <property type="term" value="P:DNA biosynthetic process"/>
    <property type="evidence" value="ECO:0007669"/>
    <property type="project" value="UniProtKB-KW"/>
</dbReference>
<dbReference type="GO" id="GO:0046104">
    <property type="term" value="P:thymidine metabolic process"/>
    <property type="evidence" value="ECO:0000318"/>
    <property type="project" value="GO_Central"/>
</dbReference>
<dbReference type="FunFam" id="3.30.60.20:FF:000086">
    <property type="entry name" value="Thymidine kinase"/>
    <property type="match status" value="1"/>
</dbReference>
<dbReference type="FunFam" id="3.40.50.300:FF:001270">
    <property type="entry name" value="Thymidine kinase"/>
    <property type="match status" value="1"/>
</dbReference>
<dbReference type="Gene3D" id="3.30.60.20">
    <property type="match status" value="1"/>
</dbReference>
<dbReference type="Gene3D" id="3.40.50.300">
    <property type="entry name" value="P-loop containing nucleotide triphosphate hydrolases"/>
    <property type="match status" value="1"/>
</dbReference>
<dbReference type="HAMAP" id="MF_00124">
    <property type="entry name" value="Thymidine_kinase"/>
    <property type="match status" value="1"/>
</dbReference>
<dbReference type="InterPro" id="IPR027417">
    <property type="entry name" value="P-loop_NTPase"/>
</dbReference>
<dbReference type="InterPro" id="IPR001267">
    <property type="entry name" value="Thymidine_kinase"/>
</dbReference>
<dbReference type="InterPro" id="IPR020633">
    <property type="entry name" value="Thymidine_kinase_CS"/>
</dbReference>
<dbReference type="NCBIfam" id="NF003296">
    <property type="entry name" value="PRK04296.1-1"/>
    <property type="match status" value="1"/>
</dbReference>
<dbReference type="PANTHER" id="PTHR11441">
    <property type="entry name" value="THYMIDINE KINASE"/>
    <property type="match status" value="1"/>
</dbReference>
<dbReference type="PANTHER" id="PTHR11441:SF0">
    <property type="entry name" value="THYMIDINE KINASE, CYTOSOLIC"/>
    <property type="match status" value="1"/>
</dbReference>
<dbReference type="Pfam" id="PF00265">
    <property type="entry name" value="TK"/>
    <property type="match status" value="1"/>
</dbReference>
<dbReference type="PIRSF" id="PIRSF035805">
    <property type="entry name" value="TK_cell"/>
    <property type="match status" value="1"/>
</dbReference>
<dbReference type="SUPFAM" id="SSF57716">
    <property type="entry name" value="Glucocorticoid receptor-like (DNA-binding domain)"/>
    <property type="match status" value="1"/>
</dbReference>
<dbReference type="SUPFAM" id="SSF52540">
    <property type="entry name" value="P-loop containing nucleoside triphosphate hydrolases"/>
    <property type="match status" value="1"/>
</dbReference>
<dbReference type="PROSITE" id="PS00603">
    <property type="entry name" value="TK_CELLULAR_TYPE"/>
    <property type="match status" value="1"/>
</dbReference>
<feature type="chain" id="PRO_0000175040" description="Thymidine kinase">
    <location>
        <begin position="1"/>
        <end position="184"/>
    </location>
</feature>
<feature type="active site" description="Proton acceptor" evidence="2">
    <location>
        <position position="84"/>
    </location>
</feature>
<feature type="binding site">
    <location>
        <begin position="10"/>
        <end position="17"/>
    </location>
    <ligand>
        <name>ATP</name>
        <dbReference type="ChEBI" id="CHEBI:30616"/>
    </ligand>
</feature>
<feature type="binding site">
    <location>
        <position position="53"/>
    </location>
    <ligand>
        <name>ATP</name>
        <dbReference type="ChEBI" id="CHEBI:30616"/>
    </ligand>
</feature>
<feature type="binding site" evidence="1">
    <location>
        <begin position="83"/>
        <end position="86"/>
    </location>
    <ligand>
        <name>ATP</name>
        <dbReference type="ChEBI" id="CHEBI:30616"/>
    </ligand>
</feature>
<feature type="binding site">
    <location>
        <position position="115"/>
    </location>
    <ligand>
        <name>substrate</name>
    </ligand>
</feature>
<feature type="binding site">
    <location>
        <position position="140"/>
    </location>
    <ligand>
        <name>Zn(2+)</name>
        <dbReference type="ChEBI" id="CHEBI:29105"/>
    </ligand>
</feature>
<feature type="binding site">
    <location>
        <position position="143"/>
    </location>
    <ligand>
        <name>Zn(2+)</name>
        <dbReference type="ChEBI" id="CHEBI:29105"/>
    </ligand>
</feature>
<feature type="binding site">
    <location>
        <begin position="161"/>
        <end position="164"/>
    </location>
    <ligand>
        <name>substrate</name>
    </ligand>
</feature>
<feature type="binding site">
    <location>
        <position position="169"/>
    </location>
    <ligand>
        <name>substrate</name>
    </ligand>
</feature>
<feature type="binding site">
    <location>
        <position position="173"/>
    </location>
    <ligand>
        <name>Zn(2+)</name>
        <dbReference type="ChEBI" id="CHEBI:29105"/>
    </ligand>
</feature>
<feature type="binding site">
    <location>
        <position position="176"/>
    </location>
    <ligand>
        <name>Zn(2+)</name>
        <dbReference type="ChEBI" id="CHEBI:29105"/>
    </ligand>
</feature>
<feature type="mutagenesis site" description="Reduced affinity for ATP." evidence="4">
    <original>H</original>
    <variation>A</variation>
    <location>
        <position position="53"/>
    </location>
</feature>
<feature type="mutagenesis site" description="Reduced affinity for ATP." evidence="4">
    <original>G</original>
    <variation>W</variation>
    <location>
        <position position="55"/>
    </location>
</feature>
<feature type="mutagenesis site" description="Reduced affinity for thymidine." evidence="4">
    <original>L</original>
    <variation>W</variation>
    <location>
        <position position="129"/>
    </location>
</feature>
<feature type="strand" evidence="6">
    <location>
        <begin position="5"/>
        <end position="11"/>
    </location>
</feature>
<feature type="helix" evidence="6">
    <location>
        <begin position="16"/>
        <end position="29"/>
    </location>
</feature>
<feature type="strand" evidence="6">
    <location>
        <begin position="33"/>
        <end position="39"/>
    </location>
</feature>
<feature type="strand" evidence="6">
    <location>
        <begin position="61"/>
        <end position="65"/>
    </location>
</feature>
<feature type="helix" evidence="6">
    <location>
        <begin position="66"/>
        <end position="72"/>
    </location>
</feature>
<feature type="strand" evidence="6">
    <location>
        <begin position="77"/>
        <end position="82"/>
    </location>
</feature>
<feature type="helix" evidence="6">
    <location>
        <begin position="85"/>
        <end position="87"/>
    </location>
</feature>
<feature type="helix" evidence="6">
    <location>
        <begin position="92"/>
        <end position="101"/>
    </location>
</feature>
<feature type="strand" evidence="6">
    <location>
        <begin position="105"/>
        <end position="113"/>
    </location>
</feature>
<feature type="helix" evidence="6">
    <location>
        <begin position="121"/>
        <end position="129"/>
    </location>
</feature>
<feature type="strand" evidence="6">
    <location>
        <begin position="131"/>
        <end position="135"/>
    </location>
</feature>
<feature type="turn" evidence="6">
    <location>
        <begin position="141"/>
        <end position="143"/>
    </location>
</feature>
<feature type="strand" evidence="7">
    <location>
        <begin position="146"/>
        <end position="148"/>
    </location>
</feature>
<feature type="strand" evidence="6">
    <location>
        <begin position="150"/>
        <end position="153"/>
    </location>
</feature>
<feature type="turn" evidence="6">
    <location>
        <begin position="166"/>
        <end position="168"/>
    </location>
</feature>
<feature type="strand" evidence="6">
    <location>
        <begin position="169"/>
        <end position="172"/>
    </location>
</feature>
<feature type="helix" evidence="6">
    <location>
        <begin position="174"/>
        <end position="180"/>
    </location>
</feature>
<evidence type="ECO:0000250" key="1"/>
<evidence type="ECO:0000255" key="2"/>
<evidence type="ECO:0000269" key="3">
    <source>
    </source>
</evidence>
<evidence type="ECO:0000269" key="4">
    <source>
    </source>
</evidence>
<evidence type="ECO:0000305" key="5"/>
<evidence type="ECO:0007829" key="6">
    <source>
        <dbReference type="PDB" id="2ORW"/>
    </source>
</evidence>
<evidence type="ECO:0007829" key="7">
    <source>
        <dbReference type="PDB" id="2QQE"/>
    </source>
</evidence>
<accession>Q9WYN2</accession>
<name>KITH_THEMA</name>
<organism>
    <name type="scientific">Thermotoga maritima (strain ATCC 43589 / DSM 3109 / JCM 10099 / NBRC 100826 / MSB8)</name>
    <dbReference type="NCBI Taxonomy" id="243274"/>
    <lineage>
        <taxon>Bacteria</taxon>
        <taxon>Thermotogati</taxon>
        <taxon>Thermotogota</taxon>
        <taxon>Thermotogae</taxon>
        <taxon>Thermotogales</taxon>
        <taxon>Thermotogaceae</taxon>
        <taxon>Thermotoga</taxon>
    </lineage>
</organism>
<sequence length="184" mass="20654">MSGKLTVITGPMYSGKTTELLSFVEIYKLGKKKVAVFKPKIDSRYHSTMIVSHSGNGVEAHVIERPEEMRKYIEEDTRGVFIDEVQFFNPSLFEVVKDLLDRGIDVFCAGLDLTHKQNPFETTALLLSLADTVIKKKAVCHRCGEYNATLTLKVAGGEEEIDVGGQEKYIAVCRDCYNTLKKRV</sequence>
<proteinExistence type="evidence at protein level"/>